<feature type="chain" id="PRO_0000293798" description="Small ribosomal subunit protein uS3">
    <location>
        <begin position="1"/>
        <end position="225"/>
    </location>
</feature>
<feature type="domain" description="KH type-2" evidence="1">
    <location>
        <begin position="38"/>
        <end position="106"/>
    </location>
</feature>
<gene>
    <name evidence="1" type="primary">rpsC</name>
    <name type="ordered locus">GbCGDNIH1_0560</name>
</gene>
<comment type="function">
    <text evidence="1">Binds the lower part of the 30S subunit head. Binds mRNA in the 70S ribosome, positioning it for translation.</text>
</comment>
<comment type="subunit">
    <text evidence="1">Part of the 30S ribosomal subunit. Forms a tight complex with proteins S10 and S14.</text>
</comment>
<comment type="similarity">
    <text evidence="1">Belongs to the universal ribosomal protein uS3 family.</text>
</comment>
<dbReference type="EMBL" id="CP000394">
    <property type="protein sequence ID" value="ABI61458.1"/>
    <property type="molecule type" value="Genomic_DNA"/>
</dbReference>
<dbReference type="RefSeq" id="WP_011631267.1">
    <property type="nucleotide sequence ID" value="NC_008343.2"/>
</dbReference>
<dbReference type="SMR" id="Q0BUP4"/>
<dbReference type="STRING" id="391165.GbCGDNIH1_0560"/>
<dbReference type="GeneID" id="69744813"/>
<dbReference type="KEGG" id="gbe:GbCGDNIH1_0560"/>
<dbReference type="eggNOG" id="COG0092">
    <property type="taxonomic scope" value="Bacteria"/>
</dbReference>
<dbReference type="HOGENOM" id="CLU_058591_0_2_5"/>
<dbReference type="OrthoDB" id="9806396at2"/>
<dbReference type="Proteomes" id="UP000001963">
    <property type="component" value="Chromosome"/>
</dbReference>
<dbReference type="GO" id="GO:0022627">
    <property type="term" value="C:cytosolic small ribosomal subunit"/>
    <property type="evidence" value="ECO:0007669"/>
    <property type="project" value="TreeGrafter"/>
</dbReference>
<dbReference type="GO" id="GO:0003729">
    <property type="term" value="F:mRNA binding"/>
    <property type="evidence" value="ECO:0007669"/>
    <property type="project" value="UniProtKB-UniRule"/>
</dbReference>
<dbReference type="GO" id="GO:0019843">
    <property type="term" value="F:rRNA binding"/>
    <property type="evidence" value="ECO:0007669"/>
    <property type="project" value="UniProtKB-UniRule"/>
</dbReference>
<dbReference type="GO" id="GO:0003735">
    <property type="term" value="F:structural constituent of ribosome"/>
    <property type="evidence" value="ECO:0007669"/>
    <property type="project" value="InterPro"/>
</dbReference>
<dbReference type="GO" id="GO:0006412">
    <property type="term" value="P:translation"/>
    <property type="evidence" value="ECO:0007669"/>
    <property type="project" value="UniProtKB-UniRule"/>
</dbReference>
<dbReference type="CDD" id="cd02412">
    <property type="entry name" value="KH-II_30S_S3"/>
    <property type="match status" value="1"/>
</dbReference>
<dbReference type="FunFam" id="3.30.1140.32:FF:000009">
    <property type="entry name" value="30S ribosomal protein S3"/>
    <property type="match status" value="1"/>
</dbReference>
<dbReference type="FunFam" id="3.30.300.20:FF:000001">
    <property type="entry name" value="30S ribosomal protein S3"/>
    <property type="match status" value="1"/>
</dbReference>
<dbReference type="Gene3D" id="3.30.300.20">
    <property type="match status" value="1"/>
</dbReference>
<dbReference type="Gene3D" id="3.30.1140.32">
    <property type="entry name" value="Ribosomal protein S3, C-terminal domain"/>
    <property type="match status" value="1"/>
</dbReference>
<dbReference type="HAMAP" id="MF_01309_B">
    <property type="entry name" value="Ribosomal_uS3_B"/>
    <property type="match status" value="1"/>
</dbReference>
<dbReference type="InterPro" id="IPR004087">
    <property type="entry name" value="KH_dom"/>
</dbReference>
<dbReference type="InterPro" id="IPR015946">
    <property type="entry name" value="KH_dom-like_a/b"/>
</dbReference>
<dbReference type="InterPro" id="IPR004044">
    <property type="entry name" value="KH_dom_type_2"/>
</dbReference>
<dbReference type="InterPro" id="IPR009019">
    <property type="entry name" value="KH_sf_prok-type"/>
</dbReference>
<dbReference type="InterPro" id="IPR036419">
    <property type="entry name" value="Ribosomal_S3_C_sf"/>
</dbReference>
<dbReference type="InterPro" id="IPR005704">
    <property type="entry name" value="Ribosomal_uS3_bac-typ"/>
</dbReference>
<dbReference type="InterPro" id="IPR001351">
    <property type="entry name" value="Ribosomal_uS3_C"/>
</dbReference>
<dbReference type="InterPro" id="IPR018280">
    <property type="entry name" value="Ribosomal_uS3_CS"/>
</dbReference>
<dbReference type="NCBIfam" id="TIGR01009">
    <property type="entry name" value="rpsC_bact"/>
    <property type="match status" value="1"/>
</dbReference>
<dbReference type="PANTHER" id="PTHR11760">
    <property type="entry name" value="30S/40S RIBOSOMAL PROTEIN S3"/>
    <property type="match status" value="1"/>
</dbReference>
<dbReference type="PANTHER" id="PTHR11760:SF19">
    <property type="entry name" value="SMALL RIBOSOMAL SUBUNIT PROTEIN US3C"/>
    <property type="match status" value="1"/>
</dbReference>
<dbReference type="Pfam" id="PF07650">
    <property type="entry name" value="KH_2"/>
    <property type="match status" value="1"/>
</dbReference>
<dbReference type="Pfam" id="PF00189">
    <property type="entry name" value="Ribosomal_S3_C"/>
    <property type="match status" value="1"/>
</dbReference>
<dbReference type="SMART" id="SM00322">
    <property type="entry name" value="KH"/>
    <property type="match status" value="1"/>
</dbReference>
<dbReference type="SUPFAM" id="SSF54814">
    <property type="entry name" value="Prokaryotic type KH domain (KH-domain type II)"/>
    <property type="match status" value="1"/>
</dbReference>
<dbReference type="SUPFAM" id="SSF54821">
    <property type="entry name" value="Ribosomal protein S3 C-terminal domain"/>
    <property type="match status" value="1"/>
</dbReference>
<dbReference type="PROSITE" id="PS50823">
    <property type="entry name" value="KH_TYPE_2"/>
    <property type="match status" value="1"/>
</dbReference>
<dbReference type="PROSITE" id="PS00548">
    <property type="entry name" value="RIBOSOMAL_S3"/>
    <property type="match status" value="1"/>
</dbReference>
<evidence type="ECO:0000255" key="1">
    <source>
        <dbReference type="HAMAP-Rule" id="MF_01309"/>
    </source>
</evidence>
<evidence type="ECO:0000305" key="2"/>
<protein>
    <recommendedName>
        <fullName evidence="1">Small ribosomal subunit protein uS3</fullName>
    </recommendedName>
    <alternativeName>
        <fullName evidence="2">30S ribosomal protein S3</fullName>
    </alternativeName>
</protein>
<keyword id="KW-1185">Reference proteome</keyword>
<keyword id="KW-0687">Ribonucleoprotein</keyword>
<keyword id="KW-0689">Ribosomal protein</keyword>
<keyword id="KW-0694">RNA-binding</keyword>
<keyword id="KW-0699">rRNA-binding</keyword>
<sequence>MGHKVNPIGLRLGINRTWDSRWYAGGDYSRLLHDDLKLRGHLRKKLSGAGVSRVVIERPAKKPRVTIYAARPGVVIGKKGQDIEALRKGLTGMAGTDVALNIVEIRKPEIDATLVAENIAQQLERRVAFRRAMKRAVQSAMRLGAQGIRINCSGRLGGAEIARIEWYREGRVPLHTLRADIDYGVATAKTTYGTCGVKVWIFKGEILAQDPMAQDRRAAEQAPQR</sequence>
<accession>Q0BUP4</accession>
<reference key="1">
    <citation type="journal article" date="2007" name="J. Bacteriol.">
        <title>Genome sequence analysis of the emerging human pathogenic acetic acid bacterium Granulibacter bethesdensis.</title>
        <authorList>
            <person name="Greenberg D.E."/>
            <person name="Porcella S.F."/>
            <person name="Zelazny A.M."/>
            <person name="Virtaneva K."/>
            <person name="Sturdevant D.E."/>
            <person name="Kupko J.J. III"/>
            <person name="Barbian K.D."/>
            <person name="Babar A."/>
            <person name="Dorward D.W."/>
            <person name="Holland S.M."/>
        </authorList>
    </citation>
    <scope>NUCLEOTIDE SEQUENCE [LARGE SCALE GENOMIC DNA]</scope>
    <source>
        <strain>ATCC BAA-1260 / CGDNIH1</strain>
    </source>
</reference>
<proteinExistence type="inferred from homology"/>
<organism>
    <name type="scientific">Granulibacter bethesdensis (strain ATCC BAA-1260 / CGDNIH1)</name>
    <dbReference type="NCBI Taxonomy" id="391165"/>
    <lineage>
        <taxon>Bacteria</taxon>
        <taxon>Pseudomonadati</taxon>
        <taxon>Pseudomonadota</taxon>
        <taxon>Alphaproteobacteria</taxon>
        <taxon>Acetobacterales</taxon>
        <taxon>Acetobacteraceae</taxon>
        <taxon>Granulibacter</taxon>
    </lineage>
</organism>
<name>RS3_GRABC</name>